<accession>P39871</accession>
<proteinExistence type="evidence at transcript level"/>
<comment type="function">
    <text>Nitrate reductase is a key enzyme involved in the first step of nitrate assimilation in plants, fungi and bacteria.</text>
</comment>
<comment type="catalytic activity">
    <reaction>
        <text>nitrite + NAD(+) + H2O = nitrate + NADH + H(+)</text>
        <dbReference type="Rhea" id="RHEA:17913"/>
        <dbReference type="ChEBI" id="CHEBI:15377"/>
        <dbReference type="ChEBI" id="CHEBI:15378"/>
        <dbReference type="ChEBI" id="CHEBI:16301"/>
        <dbReference type="ChEBI" id="CHEBI:17632"/>
        <dbReference type="ChEBI" id="CHEBI:57540"/>
        <dbReference type="ChEBI" id="CHEBI:57945"/>
        <dbReference type="EC" id="1.7.1.2"/>
    </reaction>
</comment>
<comment type="catalytic activity">
    <reaction>
        <text>nitrite + NADP(+) + H2O = nitrate + NADPH + H(+)</text>
        <dbReference type="Rhea" id="RHEA:19061"/>
        <dbReference type="ChEBI" id="CHEBI:15377"/>
        <dbReference type="ChEBI" id="CHEBI:15378"/>
        <dbReference type="ChEBI" id="CHEBI:16301"/>
        <dbReference type="ChEBI" id="CHEBI:17632"/>
        <dbReference type="ChEBI" id="CHEBI:57783"/>
        <dbReference type="ChEBI" id="CHEBI:58349"/>
        <dbReference type="EC" id="1.7.1.2"/>
    </reaction>
</comment>
<comment type="cofactor">
    <cofactor evidence="1">
        <name>FAD</name>
        <dbReference type="ChEBI" id="CHEBI:57692"/>
    </cofactor>
    <text evidence="1">Binds 1 FAD.</text>
</comment>
<comment type="cofactor">
    <cofactor evidence="1">
        <name>heme</name>
        <dbReference type="ChEBI" id="CHEBI:30413"/>
    </cofactor>
    <text evidence="1">Binds 1 heme group. The heme group is called cytochrome b-557.</text>
</comment>
<comment type="cofactor">
    <cofactor evidence="1">
        <name>Mo-molybdopterin</name>
        <dbReference type="ChEBI" id="CHEBI:71302"/>
    </cofactor>
    <text evidence="1">Binds 1 Mo-molybdopterin (Mo-MPT) cofactor per subunit.</text>
</comment>
<comment type="subunit">
    <text evidence="1">Homodimer.</text>
</comment>
<comment type="similarity">
    <text evidence="5">Belongs to the nitrate reductase family.</text>
</comment>
<dbReference type="EC" id="1.7.1.2"/>
<dbReference type="EMBL" id="X64446">
    <property type="protein sequence ID" value="CAA45776.1"/>
    <property type="molecule type" value="mRNA"/>
</dbReference>
<dbReference type="PIR" id="S24544">
    <property type="entry name" value="S24544"/>
</dbReference>
<dbReference type="SMR" id="P39871"/>
<dbReference type="STRING" id="4577.P39871"/>
<dbReference type="MaizeGDB" id="25891"/>
<dbReference type="InParanoid" id="P39871"/>
<dbReference type="Proteomes" id="UP000007305">
    <property type="component" value="Unplaced"/>
</dbReference>
<dbReference type="ExpressionAtlas" id="P39871">
    <property type="expression patterns" value="baseline and differential"/>
</dbReference>
<dbReference type="GO" id="GO:0071949">
    <property type="term" value="F:FAD binding"/>
    <property type="evidence" value="ECO:0000250"/>
    <property type="project" value="UniProtKB"/>
</dbReference>
<dbReference type="GO" id="GO:0046872">
    <property type="term" value="F:metal ion binding"/>
    <property type="evidence" value="ECO:0007669"/>
    <property type="project" value="UniProtKB-KW"/>
</dbReference>
<dbReference type="GO" id="GO:0009703">
    <property type="term" value="F:nitrate reductase (NADH) activity"/>
    <property type="evidence" value="ECO:0000318"/>
    <property type="project" value="GO_Central"/>
</dbReference>
<dbReference type="GO" id="GO:0050464">
    <property type="term" value="F:nitrate reductase (NADPH) activity"/>
    <property type="evidence" value="ECO:0007669"/>
    <property type="project" value="RHEA"/>
</dbReference>
<dbReference type="GO" id="GO:0042128">
    <property type="term" value="P:nitrate assimilation"/>
    <property type="evidence" value="ECO:0000318"/>
    <property type="project" value="GO_Central"/>
</dbReference>
<dbReference type="GO" id="GO:0006809">
    <property type="term" value="P:nitric oxide biosynthetic process"/>
    <property type="evidence" value="ECO:0000318"/>
    <property type="project" value="GO_Central"/>
</dbReference>
<dbReference type="CDD" id="cd06183">
    <property type="entry name" value="cyt_b5_reduct_like"/>
    <property type="match status" value="1"/>
</dbReference>
<dbReference type="FunFam" id="3.40.50.80:FF:000025">
    <property type="entry name" value="Nitrate reductase [NADH]"/>
    <property type="match status" value="1"/>
</dbReference>
<dbReference type="Gene3D" id="3.40.50.80">
    <property type="entry name" value="Nucleotide-binding domain of ferredoxin-NADP reductase (FNR) module"/>
    <property type="match status" value="1"/>
</dbReference>
<dbReference type="Gene3D" id="2.40.30.10">
    <property type="entry name" value="Translation factors"/>
    <property type="match status" value="1"/>
</dbReference>
<dbReference type="InterPro" id="IPR001834">
    <property type="entry name" value="CBR-like"/>
</dbReference>
<dbReference type="InterPro" id="IPR008333">
    <property type="entry name" value="Cbr1-like_FAD-bd_dom"/>
</dbReference>
<dbReference type="InterPro" id="IPR017927">
    <property type="entry name" value="FAD-bd_FR_type"/>
</dbReference>
<dbReference type="InterPro" id="IPR001709">
    <property type="entry name" value="Flavoprot_Pyr_Nucl_cyt_Rdtase"/>
</dbReference>
<dbReference type="InterPro" id="IPR039261">
    <property type="entry name" value="FNR_nucleotide-bd"/>
</dbReference>
<dbReference type="InterPro" id="IPR001433">
    <property type="entry name" value="OxRdtase_FAD/NAD-bd"/>
</dbReference>
<dbReference type="InterPro" id="IPR017938">
    <property type="entry name" value="Riboflavin_synthase-like_b-brl"/>
</dbReference>
<dbReference type="PANTHER" id="PTHR19370">
    <property type="entry name" value="NADH-CYTOCHROME B5 REDUCTASE"/>
    <property type="match status" value="1"/>
</dbReference>
<dbReference type="PANTHER" id="PTHR19370:SF100">
    <property type="entry name" value="NITRATE REDUCTASE"/>
    <property type="match status" value="1"/>
</dbReference>
<dbReference type="Pfam" id="PF00970">
    <property type="entry name" value="FAD_binding_6"/>
    <property type="match status" value="1"/>
</dbReference>
<dbReference type="Pfam" id="PF00175">
    <property type="entry name" value="NAD_binding_1"/>
    <property type="match status" value="1"/>
</dbReference>
<dbReference type="PRINTS" id="PR00406">
    <property type="entry name" value="CYTB5RDTASE"/>
</dbReference>
<dbReference type="PRINTS" id="PR00371">
    <property type="entry name" value="FPNCR"/>
</dbReference>
<dbReference type="SUPFAM" id="SSF52343">
    <property type="entry name" value="Ferredoxin reductase-like, C-terminal NADP-linked domain"/>
    <property type="match status" value="1"/>
</dbReference>
<dbReference type="SUPFAM" id="SSF63380">
    <property type="entry name" value="Riboflavin synthase domain-like"/>
    <property type="match status" value="1"/>
</dbReference>
<dbReference type="PROSITE" id="PS51384">
    <property type="entry name" value="FAD_FR"/>
    <property type="match status" value="1"/>
</dbReference>
<feature type="chain" id="PRO_0000166063" description="Nitrate reductase [NAD(P)H]">
    <location>
        <begin position="1" status="less than"/>
        <end position="231"/>
    </location>
</feature>
<feature type="domain" description="FAD-binding FR-type" evidence="4">
    <location>
        <begin position="1" status="less than"/>
        <end position="85"/>
    </location>
</feature>
<feature type="binding site" evidence="2">
    <location>
        <begin position="25"/>
        <end position="28"/>
    </location>
    <ligand>
        <name>FAD</name>
        <dbReference type="ChEBI" id="CHEBI:57692"/>
    </ligand>
</feature>
<feature type="binding site" evidence="2">
    <location>
        <begin position="42"/>
        <end position="46"/>
    </location>
    <ligand>
        <name>FAD</name>
        <dbReference type="ChEBI" id="CHEBI:57692"/>
    </ligand>
</feature>
<feature type="binding site" evidence="3">
    <location>
        <position position="47"/>
    </location>
    <ligand>
        <name>FAD</name>
        <dbReference type="ChEBI" id="CHEBI:57692"/>
    </ligand>
</feature>
<feature type="binding site" evidence="2">
    <location>
        <begin position="59"/>
        <end position="61"/>
    </location>
    <ligand>
        <name>FAD</name>
        <dbReference type="ChEBI" id="CHEBI:57692"/>
    </ligand>
</feature>
<feature type="binding site" evidence="2">
    <location>
        <position position="112"/>
    </location>
    <ligand>
        <name>FAD</name>
        <dbReference type="ChEBI" id="CHEBI:57692"/>
    </ligand>
</feature>
<feature type="non-terminal residue">
    <location>
        <position position="1"/>
    </location>
</feature>
<evidence type="ECO:0000250" key="1"/>
<evidence type="ECO:0000250" key="2">
    <source>
        <dbReference type="UniProtKB" id="A0A286R227"/>
    </source>
</evidence>
<evidence type="ECO:0000250" key="3">
    <source>
        <dbReference type="UniProtKB" id="P17571"/>
    </source>
</evidence>
<evidence type="ECO:0000255" key="4">
    <source>
        <dbReference type="PROSITE-ProRule" id="PRU00716"/>
    </source>
</evidence>
<evidence type="ECO:0000305" key="5"/>
<keyword id="KW-0274">FAD</keyword>
<keyword id="KW-0285">Flavoprotein</keyword>
<keyword id="KW-0349">Heme</keyword>
<keyword id="KW-0408">Iron</keyword>
<keyword id="KW-0479">Metal-binding</keyword>
<keyword id="KW-0500">Molybdenum</keyword>
<keyword id="KW-0520">NAD</keyword>
<keyword id="KW-0521">NADP</keyword>
<keyword id="KW-0534">Nitrate assimilation</keyword>
<keyword id="KW-0560">Oxidoreductase</keyword>
<keyword id="KW-1185">Reference proteome</keyword>
<organism>
    <name type="scientific">Zea mays</name>
    <name type="common">Maize</name>
    <dbReference type="NCBI Taxonomy" id="4577"/>
    <lineage>
        <taxon>Eukaryota</taxon>
        <taxon>Viridiplantae</taxon>
        <taxon>Streptophyta</taxon>
        <taxon>Embryophyta</taxon>
        <taxon>Tracheophyta</taxon>
        <taxon>Spermatophyta</taxon>
        <taxon>Magnoliopsida</taxon>
        <taxon>Liliopsida</taxon>
        <taxon>Poales</taxon>
        <taxon>Poaceae</taxon>
        <taxon>PACMAD clade</taxon>
        <taxon>Panicoideae</taxon>
        <taxon>Andropogonodae</taxon>
        <taxon>Andropogoneae</taxon>
        <taxon>Tripsacinae</taxon>
        <taxon>Zea</taxon>
    </lineage>
</organism>
<gene>
    <name type="primary">NAR</name>
</gene>
<protein>
    <recommendedName>
        <fullName>Nitrate reductase [NAD(P)H]</fullName>
        <shortName>NR</shortName>
        <ecNumber>1.7.1.2</ecNumber>
    </recommendedName>
</protein>
<name>NIA2_MAIZE</name>
<sequence length="231" mass="26254">PQKLGLPVGRHVYVCASIGGKLCMRAYTPTSPVDEVGHFDLLIKIYFKDEDPKYPNGGLMSQYLDSLPLGATIDIKGPHRHIEYTGRRRFVVNGKQRHARRLAMIQAGRGTTPDDDTEQAVLRDQPDDDTEMHLVYANRTDHDMLLREEIDRAWLPRTRRLKVWYVVSKVPEDGWEYGVGRVDEHVMREHLPLGDSETIALVCGPPAMIECTVRPGLEKMGYDLDKACLVF</sequence>
<reference key="1">
    <citation type="journal article" date="1992" name="Physiol. Plantarum">
        <title>Regulation of maize root nitrate reductase mRNA levels.</title>
        <authorList>
            <person name="Long D.M."/>
            <person name="Oaks A."/>
            <person name="Rothstein S.J."/>
        </authorList>
    </citation>
    <scope>NUCLEOTIDE SEQUENCE [MRNA]</scope>
    <source>
        <strain>cv. W64A X WI82E</strain>
        <tissue>Root</tissue>
    </source>
</reference>